<name>RBFA_BURO0</name>
<protein>
    <recommendedName>
        <fullName evidence="1">Ribosome-binding factor A</fullName>
    </recommendedName>
</protein>
<evidence type="ECO:0000255" key="1">
    <source>
        <dbReference type="HAMAP-Rule" id="MF_00003"/>
    </source>
</evidence>
<evidence type="ECO:0000256" key="2">
    <source>
        <dbReference type="SAM" id="MobiDB-lite"/>
    </source>
</evidence>
<reference key="1">
    <citation type="submission" date="2008-02" db="EMBL/GenBank/DDBJ databases">
        <title>Complete sequence of chromosome 1 of Burkholderia cenocepacia MC0-3.</title>
        <authorList>
            <person name="Copeland A."/>
            <person name="Lucas S."/>
            <person name="Lapidus A."/>
            <person name="Barry K."/>
            <person name="Bruce D."/>
            <person name="Goodwin L."/>
            <person name="Glavina del Rio T."/>
            <person name="Dalin E."/>
            <person name="Tice H."/>
            <person name="Pitluck S."/>
            <person name="Chain P."/>
            <person name="Malfatti S."/>
            <person name="Shin M."/>
            <person name="Vergez L."/>
            <person name="Schmutz J."/>
            <person name="Larimer F."/>
            <person name="Land M."/>
            <person name="Hauser L."/>
            <person name="Kyrpides N."/>
            <person name="Mikhailova N."/>
            <person name="Tiedje J."/>
            <person name="Richardson P."/>
        </authorList>
    </citation>
    <scope>NUCLEOTIDE SEQUENCE [LARGE SCALE GENOMIC DNA]</scope>
    <source>
        <strain>MC0-3</strain>
    </source>
</reference>
<organism>
    <name type="scientific">Burkholderia orbicola (strain MC0-3)</name>
    <dbReference type="NCBI Taxonomy" id="406425"/>
    <lineage>
        <taxon>Bacteria</taxon>
        <taxon>Pseudomonadati</taxon>
        <taxon>Pseudomonadota</taxon>
        <taxon>Betaproteobacteria</taxon>
        <taxon>Burkholderiales</taxon>
        <taxon>Burkholderiaceae</taxon>
        <taxon>Burkholderia</taxon>
        <taxon>Burkholderia cepacia complex</taxon>
        <taxon>Burkholderia orbicola</taxon>
    </lineage>
</organism>
<keyword id="KW-0963">Cytoplasm</keyword>
<keyword id="KW-0690">Ribosome biogenesis</keyword>
<gene>
    <name evidence="1" type="primary">rbfA</name>
    <name type="ordered locus">Bcenmc03_1477</name>
</gene>
<sequence>MSRKRTSPNRNVQIADQIQRDLSELIMREVKDPRIGIVTIQSVELTPDYAHAKVYFTALTGDPEKTQEALNHASGHLHNLLFKRLHIHTVPTLHFHYDQTIEKAVEMSRLIKEANSTRAKDDDEADTPAKDD</sequence>
<comment type="function">
    <text evidence="1">One of several proteins that assist in the late maturation steps of the functional core of the 30S ribosomal subunit. Associates with free 30S ribosomal subunits (but not with 30S subunits that are part of 70S ribosomes or polysomes). Required for efficient processing of 16S rRNA. May interact with the 5'-terminal helix region of 16S rRNA.</text>
</comment>
<comment type="subunit">
    <text evidence="1">Monomer. Binds 30S ribosomal subunits, but not 50S ribosomal subunits or 70S ribosomes.</text>
</comment>
<comment type="subcellular location">
    <subcellularLocation>
        <location evidence="1">Cytoplasm</location>
    </subcellularLocation>
</comment>
<comment type="similarity">
    <text evidence="1">Belongs to the RbfA family.</text>
</comment>
<accession>B1K0M1</accession>
<feature type="chain" id="PRO_1000088863" description="Ribosome-binding factor A">
    <location>
        <begin position="1"/>
        <end position="132"/>
    </location>
</feature>
<feature type="region of interest" description="Disordered" evidence="2">
    <location>
        <begin position="113"/>
        <end position="132"/>
    </location>
</feature>
<proteinExistence type="inferred from homology"/>
<dbReference type="EMBL" id="CP000958">
    <property type="protein sequence ID" value="ACA90652.1"/>
    <property type="molecule type" value="Genomic_DNA"/>
</dbReference>
<dbReference type="RefSeq" id="WP_011545262.1">
    <property type="nucleotide sequence ID" value="NC_010508.1"/>
</dbReference>
<dbReference type="SMR" id="B1K0M1"/>
<dbReference type="GeneID" id="83048273"/>
<dbReference type="KEGG" id="bcm:Bcenmc03_1477"/>
<dbReference type="HOGENOM" id="CLU_089475_5_1_4"/>
<dbReference type="Proteomes" id="UP000002169">
    <property type="component" value="Chromosome 1"/>
</dbReference>
<dbReference type="GO" id="GO:0005829">
    <property type="term" value="C:cytosol"/>
    <property type="evidence" value="ECO:0007669"/>
    <property type="project" value="TreeGrafter"/>
</dbReference>
<dbReference type="GO" id="GO:0043024">
    <property type="term" value="F:ribosomal small subunit binding"/>
    <property type="evidence" value="ECO:0007669"/>
    <property type="project" value="TreeGrafter"/>
</dbReference>
<dbReference type="GO" id="GO:0030490">
    <property type="term" value="P:maturation of SSU-rRNA"/>
    <property type="evidence" value="ECO:0007669"/>
    <property type="project" value="UniProtKB-UniRule"/>
</dbReference>
<dbReference type="Gene3D" id="3.30.300.20">
    <property type="match status" value="1"/>
</dbReference>
<dbReference type="HAMAP" id="MF_00003">
    <property type="entry name" value="RbfA"/>
    <property type="match status" value="1"/>
</dbReference>
<dbReference type="InterPro" id="IPR015946">
    <property type="entry name" value="KH_dom-like_a/b"/>
</dbReference>
<dbReference type="InterPro" id="IPR000238">
    <property type="entry name" value="RbfA"/>
</dbReference>
<dbReference type="InterPro" id="IPR023799">
    <property type="entry name" value="RbfA_dom_sf"/>
</dbReference>
<dbReference type="NCBIfam" id="TIGR00082">
    <property type="entry name" value="rbfA"/>
    <property type="match status" value="1"/>
</dbReference>
<dbReference type="PANTHER" id="PTHR33515">
    <property type="entry name" value="RIBOSOME-BINDING FACTOR A, CHLOROPLASTIC-RELATED"/>
    <property type="match status" value="1"/>
</dbReference>
<dbReference type="PANTHER" id="PTHR33515:SF1">
    <property type="entry name" value="RIBOSOME-BINDING FACTOR A, CHLOROPLASTIC-RELATED"/>
    <property type="match status" value="1"/>
</dbReference>
<dbReference type="Pfam" id="PF02033">
    <property type="entry name" value="RBFA"/>
    <property type="match status" value="1"/>
</dbReference>
<dbReference type="SUPFAM" id="SSF89919">
    <property type="entry name" value="Ribosome-binding factor A, RbfA"/>
    <property type="match status" value="1"/>
</dbReference>